<organism>
    <name type="scientific">Porphyra purpurea</name>
    <name type="common">Red seaweed</name>
    <name type="synonym">Ulva purpurea</name>
    <dbReference type="NCBI Taxonomy" id="2787"/>
    <lineage>
        <taxon>Eukaryota</taxon>
        <taxon>Rhodophyta</taxon>
        <taxon>Bangiophyceae</taxon>
        <taxon>Bangiales</taxon>
        <taxon>Bangiaceae</taxon>
        <taxon>Porphyra</taxon>
    </lineage>
</organism>
<feature type="chain" id="PRO_0000217481" description="Uncharacterized protein ORF148">
    <location>
        <begin position="1"/>
        <end position="148"/>
    </location>
</feature>
<accession>P51350</accession>
<name>YCXJ_PORPU</name>
<protein>
    <recommendedName>
        <fullName>Uncharacterized protein ORF148</fullName>
    </recommendedName>
</protein>
<reference key="1">
    <citation type="journal article" date="1995" name="Plant Mol. Biol. Rep.">
        <title>Complete nucleotide sequence of the Porphyra purpurea chloroplast genome.</title>
        <authorList>
            <person name="Reith M.E."/>
            <person name="Munholland J."/>
        </authorList>
    </citation>
    <scope>NUCLEOTIDE SEQUENCE [LARGE SCALE GENOMIC DNA]</scope>
    <source>
        <strain>Avonport</strain>
    </source>
</reference>
<sequence length="148" mass="17394">MNNKSLIFLAIKSLDIQNQTCGTINTVSLNFDDQLNQLIIDSRIQSDKDLKIIISKVLNSASQSSLHDSNLANNYNRRFLYYFKKMSFFQYIEKSVYENSILIENLGIVGLYLLYLLIECNGLFRIWVYYKIYNFEHLIKLVETKNNL</sequence>
<dbReference type="EMBL" id="U38804">
    <property type="protein sequence ID" value="AAC08236.1"/>
    <property type="molecule type" value="Genomic_DNA"/>
</dbReference>
<dbReference type="PIR" id="S73271">
    <property type="entry name" value="S73271"/>
</dbReference>
<dbReference type="RefSeq" id="NP_053960.1">
    <property type="nucleotide sequence ID" value="NC_000925.1"/>
</dbReference>
<dbReference type="GeneID" id="809986"/>
<dbReference type="GO" id="GO:0009507">
    <property type="term" value="C:chloroplast"/>
    <property type="evidence" value="ECO:0007669"/>
    <property type="project" value="UniProtKB-SubCell"/>
</dbReference>
<proteinExistence type="predicted"/>
<geneLocation type="chloroplast"/>
<keyword id="KW-0150">Chloroplast</keyword>
<keyword id="KW-0934">Plastid</keyword>
<comment type="subcellular location">
    <subcellularLocation>
        <location>Plastid</location>
        <location>Chloroplast</location>
    </subcellularLocation>
</comment>